<evidence type="ECO:0000255" key="1">
    <source>
        <dbReference type="HAMAP-Rule" id="MF_00502"/>
    </source>
</evidence>
<evidence type="ECO:0000305" key="2"/>
<comment type="subunit">
    <text evidence="1">Part of the 50S ribosomal subunit.</text>
</comment>
<comment type="similarity">
    <text evidence="1">Belongs to the bacterial ribosomal protein bL31 family. Type B subfamily.</text>
</comment>
<name>RL31B_BURP6</name>
<reference key="1">
    <citation type="journal article" date="2010" name="Genome Biol. Evol.">
        <title>Continuing evolution of Burkholderia mallei through genome reduction and large-scale rearrangements.</title>
        <authorList>
            <person name="Losada L."/>
            <person name="Ronning C.M."/>
            <person name="DeShazer D."/>
            <person name="Woods D."/>
            <person name="Fedorova N."/>
            <person name="Kim H.S."/>
            <person name="Shabalina S.A."/>
            <person name="Pearson T.R."/>
            <person name="Brinkac L."/>
            <person name="Tan P."/>
            <person name="Nandi T."/>
            <person name="Crabtree J."/>
            <person name="Badger J."/>
            <person name="Beckstrom-Sternberg S."/>
            <person name="Saqib M."/>
            <person name="Schutzer S.E."/>
            <person name="Keim P."/>
            <person name="Nierman W.C."/>
        </authorList>
    </citation>
    <scope>NUCLEOTIDE SEQUENCE [LARGE SCALE GENOMIC DNA]</scope>
    <source>
        <strain>668</strain>
    </source>
</reference>
<dbReference type="EMBL" id="CP000570">
    <property type="protein sequence ID" value="ABN82410.1"/>
    <property type="molecule type" value="Genomic_DNA"/>
</dbReference>
<dbReference type="RefSeq" id="WP_004193070.1">
    <property type="nucleotide sequence ID" value="NC_009074.1"/>
</dbReference>
<dbReference type="SMR" id="A3NA78"/>
<dbReference type="KEGG" id="bpd:BURPS668_2215"/>
<dbReference type="HOGENOM" id="CLU_114306_2_1_4"/>
<dbReference type="GO" id="GO:1990904">
    <property type="term" value="C:ribonucleoprotein complex"/>
    <property type="evidence" value="ECO:0007669"/>
    <property type="project" value="UniProtKB-KW"/>
</dbReference>
<dbReference type="GO" id="GO:0005840">
    <property type="term" value="C:ribosome"/>
    <property type="evidence" value="ECO:0007669"/>
    <property type="project" value="UniProtKB-KW"/>
</dbReference>
<dbReference type="GO" id="GO:0003735">
    <property type="term" value="F:structural constituent of ribosome"/>
    <property type="evidence" value="ECO:0007669"/>
    <property type="project" value="InterPro"/>
</dbReference>
<dbReference type="GO" id="GO:0006412">
    <property type="term" value="P:translation"/>
    <property type="evidence" value="ECO:0007669"/>
    <property type="project" value="UniProtKB-UniRule"/>
</dbReference>
<dbReference type="Gene3D" id="4.10.830.30">
    <property type="entry name" value="Ribosomal protein L31"/>
    <property type="match status" value="1"/>
</dbReference>
<dbReference type="HAMAP" id="MF_00502">
    <property type="entry name" value="Ribosomal_bL31_2"/>
    <property type="match status" value="1"/>
</dbReference>
<dbReference type="InterPro" id="IPR034704">
    <property type="entry name" value="Ribosomal_bL28/bL31-like_sf"/>
</dbReference>
<dbReference type="InterPro" id="IPR002150">
    <property type="entry name" value="Ribosomal_bL31"/>
</dbReference>
<dbReference type="InterPro" id="IPR027493">
    <property type="entry name" value="Ribosomal_bL31_B"/>
</dbReference>
<dbReference type="InterPro" id="IPR042105">
    <property type="entry name" value="Ribosomal_bL31_sf"/>
</dbReference>
<dbReference type="NCBIfam" id="TIGR00105">
    <property type="entry name" value="L31"/>
    <property type="match status" value="1"/>
</dbReference>
<dbReference type="NCBIfam" id="NF002462">
    <property type="entry name" value="PRK01678.1"/>
    <property type="match status" value="1"/>
</dbReference>
<dbReference type="PANTHER" id="PTHR33280">
    <property type="entry name" value="50S RIBOSOMAL PROTEIN L31, CHLOROPLASTIC"/>
    <property type="match status" value="1"/>
</dbReference>
<dbReference type="PANTHER" id="PTHR33280:SF1">
    <property type="entry name" value="LARGE RIBOSOMAL SUBUNIT PROTEIN BL31C"/>
    <property type="match status" value="1"/>
</dbReference>
<dbReference type="Pfam" id="PF01197">
    <property type="entry name" value="Ribosomal_L31"/>
    <property type="match status" value="1"/>
</dbReference>
<dbReference type="PRINTS" id="PR01249">
    <property type="entry name" value="RIBOSOMALL31"/>
</dbReference>
<dbReference type="SUPFAM" id="SSF143800">
    <property type="entry name" value="L28p-like"/>
    <property type="match status" value="1"/>
</dbReference>
<sequence length="87" mass="9912">MKQGIHPDYREVVFQDMSNGFKFITRSTIQTRETIEFEGKTYPLAKIEVSSESHSFYTGQQKIMDTAGRVEKFKNKFGARASGKAAK</sequence>
<proteinExistence type="inferred from homology"/>
<organism>
    <name type="scientific">Burkholderia pseudomallei (strain 668)</name>
    <dbReference type="NCBI Taxonomy" id="320373"/>
    <lineage>
        <taxon>Bacteria</taxon>
        <taxon>Pseudomonadati</taxon>
        <taxon>Pseudomonadota</taxon>
        <taxon>Betaproteobacteria</taxon>
        <taxon>Burkholderiales</taxon>
        <taxon>Burkholderiaceae</taxon>
        <taxon>Burkholderia</taxon>
        <taxon>pseudomallei group</taxon>
    </lineage>
</organism>
<protein>
    <recommendedName>
        <fullName evidence="1">Large ribosomal subunit protein bL31B</fullName>
    </recommendedName>
    <alternativeName>
        <fullName evidence="2">50S ribosomal protein L31 type B</fullName>
    </alternativeName>
</protein>
<feature type="chain" id="PRO_1000014692" description="Large ribosomal subunit protein bL31B">
    <location>
        <begin position="1"/>
        <end position="87"/>
    </location>
</feature>
<gene>
    <name evidence="1" type="primary">rpmE2</name>
    <name type="ordered locus">BURPS668_2215</name>
</gene>
<keyword id="KW-0687">Ribonucleoprotein</keyword>
<keyword id="KW-0689">Ribosomal protein</keyword>
<accession>A3NA78</accession>